<dbReference type="EMBL" id="CP000468">
    <property type="protein sequence ID" value="ABJ00669.1"/>
    <property type="molecule type" value="Genomic_DNA"/>
</dbReference>
<dbReference type="RefSeq" id="WP_000808672.1">
    <property type="nucleotide sequence ID" value="NZ_CADILS010000001.1"/>
</dbReference>
<dbReference type="KEGG" id="ecv:APECO1_370"/>
<dbReference type="HOGENOM" id="CLU_089554_2_0_6"/>
<dbReference type="Proteomes" id="UP000008216">
    <property type="component" value="Chromosome"/>
</dbReference>
<dbReference type="GO" id="GO:0005886">
    <property type="term" value="C:plasma membrane"/>
    <property type="evidence" value="ECO:0007669"/>
    <property type="project" value="UniProtKB-SubCell"/>
</dbReference>
<dbReference type="HAMAP" id="MF_00189">
    <property type="entry name" value="YciB"/>
    <property type="match status" value="1"/>
</dbReference>
<dbReference type="InterPro" id="IPR006008">
    <property type="entry name" value="YciB"/>
</dbReference>
<dbReference type="NCBIfam" id="TIGR00997">
    <property type="entry name" value="ispZ"/>
    <property type="match status" value="1"/>
</dbReference>
<dbReference type="NCBIfam" id="NF001324">
    <property type="entry name" value="PRK00259.1-2"/>
    <property type="match status" value="1"/>
</dbReference>
<dbReference type="NCBIfam" id="NF001325">
    <property type="entry name" value="PRK00259.1-3"/>
    <property type="match status" value="1"/>
</dbReference>
<dbReference type="NCBIfam" id="NF001326">
    <property type="entry name" value="PRK00259.1-4"/>
    <property type="match status" value="1"/>
</dbReference>
<dbReference type="PANTHER" id="PTHR36917:SF1">
    <property type="entry name" value="INNER MEMBRANE-SPANNING PROTEIN YCIB"/>
    <property type="match status" value="1"/>
</dbReference>
<dbReference type="PANTHER" id="PTHR36917">
    <property type="entry name" value="INTRACELLULAR SEPTATION PROTEIN A-RELATED"/>
    <property type="match status" value="1"/>
</dbReference>
<dbReference type="Pfam" id="PF04279">
    <property type="entry name" value="IspA"/>
    <property type="match status" value="1"/>
</dbReference>
<proteinExistence type="inferred from homology"/>
<sequence>MKQFLDFLPLVVFFAFYKIYDIYAATAALIVATAIVLIYSWVRFRKVEKMALITFVLVVVFGGLTLFFHNDEFIKWKVTVIYALFAGALLVSQWVMKKPLIQRMLGKELTLPQSVWSKLNLAWAVFFILCGLANIYIAFWLPQNIWVNFKVFGLTALTLIFTLLSGIYIYRHMPQEDKS</sequence>
<keyword id="KW-0997">Cell inner membrane</keyword>
<keyword id="KW-1003">Cell membrane</keyword>
<keyword id="KW-0472">Membrane</keyword>
<keyword id="KW-1185">Reference proteome</keyword>
<keyword id="KW-0812">Transmembrane</keyword>
<keyword id="KW-1133">Transmembrane helix</keyword>
<accession>A1AAH9</accession>
<feature type="chain" id="PRO_1000021009" description="Inner membrane-spanning protein YciB">
    <location>
        <begin position="1"/>
        <end position="179"/>
    </location>
</feature>
<feature type="transmembrane region" description="Helical" evidence="1">
    <location>
        <begin position="22"/>
        <end position="42"/>
    </location>
</feature>
<feature type="transmembrane region" description="Helical" evidence="1">
    <location>
        <begin position="50"/>
        <end position="70"/>
    </location>
</feature>
<feature type="transmembrane region" description="Helical" evidence="1">
    <location>
        <begin position="76"/>
        <end position="96"/>
    </location>
</feature>
<feature type="transmembrane region" description="Helical" evidence="1">
    <location>
        <begin position="121"/>
        <end position="141"/>
    </location>
</feature>
<feature type="transmembrane region" description="Helical" evidence="1">
    <location>
        <begin position="149"/>
        <end position="169"/>
    </location>
</feature>
<protein>
    <recommendedName>
        <fullName evidence="1">Inner membrane-spanning protein YciB</fullName>
    </recommendedName>
</protein>
<comment type="function">
    <text evidence="1">Plays a role in cell envelope biogenesis, maintenance of cell envelope integrity and membrane homeostasis.</text>
</comment>
<comment type="subcellular location">
    <subcellularLocation>
        <location evidence="1">Cell inner membrane</location>
        <topology evidence="1">Multi-pass membrane protein</topology>
    </subcellularLocation>
</comment>
<comment type="similarity">
    <text evidence="1">Belongs to the YciB family.</text>
</comment>
<evidence type="ECO:0000255" key="1">
    <source>
        <dbReference type="HAMAP-Rule" id="MF_00189"/>
    </source>
</evidence>
<reference key="1">
    <citation type="journal article" date="2007" name="J. Bacteriol.">
        <title>The genome sequence of avian pathogenic Escherichia coli strain O1:K1:H7 shares strong similarities with human extraintestinal pathogenic E. coli genomes.</title>
        <authorList>
            <person name="Johnson T.J."/>
            <person name="Kariyawasam S."/>
            <person name="Wannemuehler Y."/>
            <person name="Mangiamele P."/>
            <person name="Johnson S.J."/>
            <person name="Doetkott C."/>
            <person name="Skyberg J.A."/>
            <person name="Lynne A.M."/>
            <person name="Johnson J.R."/>
            <person name="Nolan L.K."/>
        </authorList>
    </citation>
    <scope>NUCLEOTIDE SEQUENCE [LARGE SCALE GENOMIC DNA]</scope>
</reference>
<organism>
    <name type="scientific">Escherichia coli O1:K1 / APEC</name>
    <dbReference type="NCBI Taxonomy" id="405955"/>
    <lineage>
        <taxon>Bacteria</taxon>
        <taxon>Pseudomonadati</taxon>
        <taxon>Pseudomonadota</taxon>
        <taxon>Gammaproteobacteria</taxon>
        <taxon>Enterobacterales</taxon>
        <taxon>Enterobacteriaceae</taxon>
        <taxon>Escherichia</taxon>
    </lineage>
</organism>
<name>YCIB_ECOK1</name>
<gene>
    <name evidence="1" type="primary">yciB</name>
    <name type="ordered locus">Ecok1_11750</name>
    <name type="ORF">APECO1_370</name>
</gene>